<organism>
    <name type="scientific">Pseudomonas syringae pv. tomato (strain ATCC BAA-871 / DC3000)</name>
    <dbReference type="NCBI Taxonomy" id="223283"/>
    <lineage>
        <taxon>Bacteria</taxon>
        <taxon>Pseudomonadati</taxon>
        <taxon>Pseudomonadota</taxon>
        <taxon>Gammaproteobacteria</taxon>
        <taxon>Pseudomonadales</taxon>
        <taxon>Pseudomonadaceae</taxon>
        <taxon>Pseudomonas</taxon>
    </lineage>
</organism>
<gene>
    <name type="ordered locus">PSPTO_0546</name>
</gene>
<sequence length="423" mass="48609">MSYVIDRRLNGKNKSTVNRQRFLRRYRDHIKKAVEEAVSRRSITDMEHGEQISIPGRDIDEPVLHHGRGGKQTVVHPGNKEFTTGEHIARPQGGAGGKGPGKAGNSGEGMDEFSFQITQEEFLEFMFEDLELPNLVKRNLTGTDTFKTVRAGISNEGNPSRINIIRTLRSAHARRIALSGSSRAKLREATSELERIKREEPDNFGDIQALEVEIDRLKARIRRVPYLDTFDLKYNLLVKQPNPSSKAVMFCLMDVSGSMTQATKDIAKRFFILLYLFLKRNYDKIDVVFIRHHTSAREVDEEEFFYSRETGGTIVSSALKLMQEIMAARYPSSDWNIYAAQASDGDNWNDDSPICREILTKQIMPFVQYYTYVEITPREHQALWYEYERIGDDFADTFAQQQLVSAGDIYPVFRELFQRRLVS</sequence>
<dbReference type="EMBL" id="AE016853">
    <property type="protein sequence ID" value="AAO54088.1"/>
    <property type="molecule type" value="Genomic_DNA"/>
</dbReference>
<dbReference type="RefSeq" id="NP_790393.1">
    <property type="nucleotide sequence ID" value="NC_004578.1"/>
</dbReference>
<dbReference type="RefSeq" id="WP_007244449.1">
    <property type="nucleotide sequence ID" value="NC_004578.1"/>
</dbReference>
<dbReference type="SMR" id="Q88A51"/>
<dbReference type="STRING" id="223283.PSPTO_0546"/>
<dbReference type="GeneID" id="1182156"/>
<dbReference type="KEGG" id="pst:PSPTO_0546"/>
<dbReference type="PATRIC" id="fig|223283.9.peg.556"/>
<dbReference type="eggNOG" id="COG2718">
    <property type="taxonomic scope" value="Bacteria"/>
</dbReference>
<dbReference type="HOGENOM" id="CLU_049702_0_0_6"/>
<dbReference type="OrthoDB" id="9788289at2"/>
<dbReference type="PhylomeDB" id="Q88A51"/>
<dbReference type="Proteomes" id="UP000002515">
    <property type="component" value="Chromosome"/>
</dbReference>
<dbReference type="HAMAP" id="MF_01232">
    <property type="entry name" value="UPF0229"/>
    <property type="match status" value="1"/>
</dbReference>
<dbReference type="InterPro" id="IPR006698">
    <property type="entry name" value="UPF0229"/>
</dbReference>
<dbReference type="InterPro" id="IPR036465">
    <property type="entry name" value="vWFA_dom_sf"/>
</dbReference>
<dbReference type="NCBIfam" id="NF003707">
    <property type="entry name" value="PRK05325.1-2"/>
    <property type="match status" value="1"/>
</dbReference>
<dbReference type="NCBIfam" id="NF003708">
    <property type="entry name" value="PRK05325.1-3"/>
    <property type="match status" value="1"/>
</dbReference>
<dbReference type="PANTHER" id="PTHR30510">
    <property type="entry name" value="UPF0229 PROTEIN YEAH"/>
    <property type="match status" value="1"/>
</dbReference>
<dbReference type="PANTHER" id="PTHR30510:SF2">
    <property type="entry name" value="UPF0229 PROTEIN YEAH"/>
    <property type="match status" value="1"/>
</dbReference>
<dbReference type="Pfam" id="PF04285">
    <property type="entry name" value="DUF444"/>
    <property type="match status" value="1"/>
</dbReference>
<dbReference type="SUPFAM" id="SSF53300">
    <property type="entry name" value="vWA-like"/>
    <property type="match status" value="1"/>
</dbReference>
<keyword id="KW-1185">Reference proteome</keyword>
<evidence type="ECO:0000255" key="1">
    <source>
        <dbReference type="HAMAP-Rule" id="MF_01232"/>
    </source>
</evidence>
<evidence type="ECO:0000256" key="2">
    <source>
        <dbReference type="SAM" id="MobiDB-lite"/>
    </source>
</evidence>
<reference key="1">
    <citation type="journal article" date="2003" name="Proc. Natl. Acad. Sci. U.S.A.">
        <title>The complete genome sequence of the Arabidopsis and tomato pathogen Pseudomonas syringae pv. tomato DC3000.</title>
        <authorList>
            <person name="Buell C.R."/>
            <person name="Joardar V."/>
            <person name="Lindeberg M."/>
            <person name="Selengut J."/>
            <person name="Paulsen I.T."/>
            <person name="Gwinn M.L."/>
            <person name="Dodson R.J."/>
            <person name="DeBoy R.T."/>
            <person name="Durkin A.S."/>
            <person name="Kolonay J.F."/>
            <person name="Madupu R."/>
            <person name="Daugherty S.C."/>
            <person name="Brinkac L.M."/>
            <person name="Beanan M.J."/>
            <person name="Haft D.H."/>
            <person name="Nelson W.C."/>
            <person name="Davidsen T.M."/>
            <person name="Zafar N."/>
            <person name="Zhou L."/>
            <person name="Liu J."/>
            <person name="Yuan Q."/>
            <person name="Khouri H.M."/>
            <person name="Fedorova N.B."/>
            <person name="Tran B."/>
            <person name="Russell D."/>
            <person name="Berry K.J."/>
            <person name="Utterback T.R."/>
            <person name="Van Aken S.E."/>
            <person name="Feldblyum T.V."/>
            <person name="D'Ascenzo M."/>
            <person name="Deng W.-L."/>
            <person name="Ramos A.R."/>
            <person name="Alfano J.R."/>
            <person name="Cartinhour S."/>
            <person name="Chatterjee A.K."/>
            <person name="Delaney T.P."/>
            <person name="Lazarowitz S.G."/>
            <person name="Martin G.B."/>
            <person name="Schneider D.J."/>
            <person name="Tang X."/>
            <person name="Bender C.L."/>
            <person name="White O."/>
            <person name="Fraser C.M."/>
            <person name="Collmer A."/>
        </authorList>
    </citation>
    <scope>NUCLEOTIDE SEQUENCE [LARGE SCALE GENOMIC DNA]</scope>
    <source>
        <strain>ATCC BAA-871 / DC3000</strain>
    </source>
</reference>
<accession>Q88A51</accession>
<feature type="chain" id="PRO_0000068201" description="UPF0229 protein PSPTO_0546">
    <location>
        <begin position="1"/>
        <end position="423"/>
    </location>
</feature>
<feature type="region of interest" description="Disordered" evidence="2">
    <location>
        <begin position="65"/>
        <end position="110"/>
    </location>
</feature>
<feature type="compositionally biased region" description="Gly residues" evidence="2">
    <location>
        <begin position="93"/>
        <end position="107"/>
    </location>
</feature>
<name>Y546_PSESM</name>
<protein>
    <recommendedName>
        <fullName evidence="1">UPF0229 protein PSPTO_0546</fullName>
    </recommendedName>
</protein>
<proteinExistence type="inferred from homology"/>
<comment type="similarity">
    <text evidence="1">Belongs to the UPF0229 family.</text>
</comment>